<keyword id="KW-0378">Hydrolase</keyword>
<keyword id="KW-0479">Metal-binding</keyword>
<keyword id="KW-0862">Zinc</keyword>
<gene>
    <name evidence="1" type="primary">mtaD</name>
    <name type="ordered locus">TON_1653</name>
</gene>
<reference key="1">
    <citation type="journal article" date="2008" name="J. Bacteriol.">
        <title>The complete genome sequence of Thermococcus onnurineus NA1 reveals a mixed heterotrophic and carboxydotrophic metabolism.</title>
        <authorList>
            <person name="Lee H.S."/>
            <person name="Kang S.G."/>
            <person name="Bae S.S."/>
            <person name="Lim J.K."/>
            <person name="Cho Y."/>
            <person name="Kim Y.J."/>
            <person name="Jeon J.H."/>
            <person name="Cha S.-S."/>
            <person name="Kwon K.K."/>
            <person name="Kim H.-T."/>
            <person name="Park C.-J."/>
            <person name="Lee H.-W."/>
            <person name="Kim S.I."/>
            <person name="Chun J."/>
            <person name="Colwell R.R."/>
            <person name="Kim S.-J."/>
            <person name="Lee J.-H."/>
        </authorList>
    </citation>
    <scope>NUCLEOTIDE SEQUENCE [LARGE SCALE GENOMIC DNA]</scope>
    <source>
        <strain>NA1</strain>
    </source>
</reference>
<organism>
    <name type="scientific">Thermococcus onnurineus (strain NA1)</name>
    <dbReference type="NCBI Taxonomy" id="523850"/>
    <lineage>
        <taxon>Archaea</taxon>
        <taxon>Methanobacteriati</taxon>
        <taxon>Methanobacteriota</taxon>
        <taxon>Thermococci</taxon>
        <taxon>Thermococcales</taxon>
        <taxon>Thermococcaceae</taxon>
        <taxon>Thermococcus</taxon>
    </lineage>
</organism>
<proteinExistence type="inferred from homology"/>
<name>MTAD_THEON</name>
<accession>B6YUF8</accession>
<protein>
    <recommendedName>
        <fullName evidence="1">5-methylthioadenosine/S-adenosylhomocysteine deaminase</fullName>
        <shortName evidence="1">MTA/SAH deaminase</shortName>
        <ecNumber evidence="1">3.5.4.28</ecNumber>
        <ecNumber evidence="1">3.5.4.31</ecNumber>
    </recommendedName>
</protein>
<comment type="function">
    <text evidence="1">Catalyzes the deamination of 5-methylthioadenosine and S-adenosyl-L-homocysteine into 5-methylthioinosine and S-inosyl-L-homocysteine, respectively. Is also able to deaminate adenosine.</text>
</comment>
<comment type="catalytic activity">
    <reaction evidence="1">
        <text>S-adenosyl-L-homocysteine + H2O + H(+) = S-inosyl-L-homocysteine + NH4(+)</text>
        <dbReference type="Rhea" id="RHEA:20716"/>
        <dbReference type="ChEBI" id="CHEBI:15377"/>
        <dbReference type="ChEBI" id="CHEBI:15378"/>
        <dbReference type="ChEBI" id="CHEBI:28938"/>
        <dbReference type="ChEBI" id="CHEBI:57856"/>
        <dbReference type="ChEBI" id="CHEBI:57985"/>
        <dbReference type="EC" id="3.5.4.28"/>
    </reaction>
</comment>
<comment type="catalytic activity">
    <reaction evidence="1">
        <text>S-methyl-5'-thioadenosine + H2O + H(+) = S-methyl-5'-thioinosine + NH4(+)</text>
        <dbReference type="Rhea" id="RHEA:25025"/>
        <dbReference type="ChEBI" id="CHEBI:15377"/>
        <dbReference type="ChEBI" id="CHEBI:15378"/>
        <dbReference type="ChEBI" id="CHEBI:17509"/>
        <dbReference type="ChEBI" id="CHEBI:28938"/>
        <dbReference type="ChEBI" id="CHEBI:48595"/>
        <dbReference type="EC" id="3.5.4.31"/>
    </reaction>
</comment>
<comment type="cofactor">
    <cofactor evidence="1">
        <name>Zn(2+)</name>
        <dbReference type="ChEBI" id="CHEBI:29105"/>
    </cofactor>
    <text evidence="1">Binds 1 zinc ion per subunit.</text>
</comment>
<comment type="similarity">
    <text evidence="1">Belongs to the metallo-dependent hydrolases superfamily. MTA/SAH deaminase family.</text>
</comment>
<feature type="chain" id="PRO_1000140353" description="5-methylthioadenosine/S-adenosylhomocysteine deaminase">
    <location>
        <begin position="1"/>
        <end position="424"/>
    </location>
</feature>
<feature type="binding site" evidence="1">
    <location>
        <position position="60"/>
    </location>
    <ligand>
        <name>Zn(2+)</name>
        <dbReference type="ChEBI" id="CHEBI:29105"/>
    </ligand>
</feature>
<feature type="binding site" evidence="1">
    <location>
        <position position="62"/>
    </location>
    <ligand>
        <name>Zn(2+)</name>
        <dbReference type="ChEBI" id="CHEBI:29105"/>
    </ligand>
</feature>
<feature type="binding site" evidence="1">
    <location>
        <position position="89"/>
    </location>
    <ligand>
        <name>substrate</name>
    </ligand>
</feature>
<feature type="binding site" evidence="1">
    <location>
        <position position="181"/>
    </location>
    <ligand>
        <name>substrate</name>
    </ligand>
</feature>
<feature type="binding site" evidence="1">
    <location>
        <position position="208"/>
    </location>
    <ligand>
        <name>Zn(2+)</name>
        <dbReference type="ChEBI" id="CHEBI:29105"/>
    </ligand>
</feature>
<feature type="binding site" evidence="1">
    <location>
        <position position="211"/>
    </location>
    <ligand>
        <name>substrate</name>
    </ligand>
</feature>
<feature type="binding site" evidence="1">
    <location>
        <position position="296"/>
    </location>
    <ligand>
        <name>substrate</name>
    </ligand>
</feature>
<feature type="binding site" evidence="1">
    <location>
        <position position="296"/>
    </location>
    <ligand>
        <name>Zn(2+)</name>
        <dbReference type="ChEBI" id="CHEBI:29105"/>
    </ligand>
</feature>
<sequence>MSILIKNGYVVYGENLEVIKADVLIESNKIVEVAKNINKSADTVIDAKGKVVSPGFVNLHTHSPMGLFRGLADDLPLMDWLQDHIWPKEAKLTREYTKVGAYLGALEMIKSGTTTFLDMYFFMDAVAEVTLESGLRGYLSYGMIDLGDPEKTEKEVNEALRIMKFIEGLDSDRVHFVFGPHAPYTCSIALLKEVRRLANEHGKLITIHVSETMAEIGQISERYGKSPVVLLDDIGFFGRDVIIAHGVWLDSRDIQILARHGVTVAHNPASNMKLASGVMPLQRLLNAGVNVGLGTDGSASNNNLDMLDEMKLAALLHKVHNLDPTVADAETVFRMATVNGARALGLKAGIIKEGYLADIAIIDFNKPHLRPINNVISHLVYSANGNDVETTIVDGKVLMLDRELFTLDEEKILNDAERVIGELT</sequence>
<dbReference type="EC" id="3.5.4.28" evidence="1"/>
<dbReference type="EC" id="3.5.4.31" evidence="1"/>
<dbReference type="EMBL" id="CP000855">
    <property type="protein sequence ID" value="ACJ17143.1"/>
    <property type="molecule type" value="Genomic_DNA"/>
</dbReference>
<dbReference type="RefSeq" id="WP_012572615.1">
    <property type="nucleotide sequence ID" value="NC_011529.1"/>
</dbReference>
<dbReference type="SMR" id="B6YUF8"/>
<dbReference type="STRING" id="523850.TON_1653"/>
<dbReference type="GeneID" id="7017322"/>
<dbReference type="KEGG" id="ton:TON_1653"/>
<dbReference type="PATRIC" id="fig|523850.10.peg.1666"/>
<dbReference type="eggNOG" id="arCOG00695">
    <property type="taxonomic scope" value="Archaea"/>
</dbReference>
<dbReference type="HOGENOM" id="CLU_012358_2_1_2"/>
<dbReference type="OrthoDB" id="372084at2157"/>
<dbReference type="Proteomes" id="UP000002727">
    <property type="component" value="Chromosome"/>
</dbReference>
<dbReference type="GO" id="GO:0090614">
    <property type="term" value="F:5'-methylthioadenosine deaminase activity"/>
    <property type="evidence" value="ECO:0007669"/>
    <property type="project" value="UniProtKB-UniRule"/>
</dbReference>
<dbReference type="GO" id="GO:0046872">
    <property type="term" value="F:metal ion binding"/>
    <property type="evidence" value="ECO:0007669"/>
    <property type="project" value="UniProtKB-KW"/>
</dbReference>
<dbReference type="GO" id="GO:0050270">
    <property type="term" value="F:S-adenosylhomocysteine deaminase activity"/>
    <property type="evidence" value="ECO:0007669"/>
    <property type="project" value="UniProtKB-UniRule"/>
</dbReference>
<dbReference type="CDD" id="cd01298">
    <property type="entry name" value="ATZ_TRZ_like"/>
    <property type="match status" value="1"/>
</dbReference>
<dbReference type="FunFam" id="3.20.20.140:FF:000014">
    <property type="entry name" value="5-methylthioadenosine/S-adenosylhomocysteine deaminase"/>
    <property type="match status" value="1"/>
</dbReference>
<dbReference type="Gene3D" id="3.20.20.140">
    <property type="entry name" value="Metal-dependent hydrolases"/>
    <property type="match status" value="1"/>
</dbReference>
<dbReference type="Gene3D" id="2.30.40.10">
    <property type="entry name" value="Urease, subunit C, domain 1"/>
    <property type="match status" value="1"/>
</dbReference>
<dbReference type="HAMAP" id="MF_01281">
    <property type="entry name" value="MTA_SAH_deamin"/>
    <property type="match status" value="1"/>
</dbReference>
<dbReference type="InterPro" id="IPR006680">
    <property type="entry name" value="Amidohydro-rel"/>
</dbReference>
<dbReference type="InterPro" id="IPR023512">
    <property type="entry name" value="Deaminase_MtaD/DadD"/>
</dbReference>
<dbReference type="InterPro" id="IPR011059">
    <property type="entry name" value="Metal-dep_hydrolase_composite"/>
</dbReference>
<dbReference type="InterPro" id="IPR032466">
    <property type="entry name" value="Metal_Hydrolase"/>
</dbReference>
<dbReference type="InterPro" id="IPR050287">
    <property type="entry name" value="MTA/SAH_deaminase"/>
</dbReference>
<dbReference type="NCBIfam" id="NF006252">
    <property type="entry name" value="PRK08393.1"/>
    <property type="match status" value="1"/>
</dbReference>
<dbReference type="PANTHER" id="PTHR43794:SF11">
    <property type="entry name" value="AMIDOHYDROLASE-RELATED DOMAIN-CONTAINING PROTEIN"/>
    <property type="match status" value="1"/>
</dbReference>
<dbReference type="PANTHER" id="PTHR43794">
    <property type="entry name" value="AMINOHYDROLASE SSNA-RELATED"/>
    <property type="match status" value="1"/>
</dbReference>
<dbReference type="Pfam" id="PF01979">
    <property type="entry name" value="Amidohydro_1"/>
    <property type="match status" value="1"/>
</dbReference>
<dbReference type="SUPFAM" id="SSF51338">
    <property type="entry name" value="Composite domain of metallo-dependent hydrolases"/>
    <property type="match status" value="1"/>
</dbReference>
<dbReference type="SUPFAM" id="SSF51556">
    <property type="entry name" value="Metallo-dependent hydrolases"/>
    <property type="match status" value="1"/>
</dbReference>
<evidence type="ECO:0000255" key="1">
    <source>
        <dbReference type="HAMAP-Rule" id="MF_01281"/>
    </source>
</evidence>